<organism>
    <name type="scientific">Anisakis simplex</name>
    <name type="common">Herring worm</name>
    <dbReference type="NCBI Taxonomy" id="6269"/>
    <lineage>
        <taxon>Eukaryota</taxon>
        <taxon>Metazoa</taxon>
        <taxon>Ecdysozoa</taxon>
        <taxon>Nematoda</taxon>
        <taxon>Chromadorea</taxon>
        <taxon>Rhabditida</taxon>
        <taxon>Spirurina</taxon>
        <taxon>Ascaridomorpha</taxon>
        <taxon>Ascaridoidea</taxon>
        <taxon>Anisakidae</taxon>
        <taxon>Anisakis</taxon>
        <taxon>Anisakis simplex complex</taxon>
    </lineage>
</organism>
<name>ASP3_ANISI</name>
<comment type="function">
    <text evidence="1">Defends the organism against the host's proteinases.</text>
</comment>
<comment type="subcellular location">
    <subcellularLocation>
        <location evidence="1">Secreted</location>
    </subcellularLocation>
</comment>
<reference key="1">
    <citation type="journal article" date="1998" name="Exp. Parasitol.">
        <title>Anisakis simplex: mutational bursts in the reactive site centers of serine protease inhibitors from an ascarid nematode.</title>
        <authorList>
            <person name="Lu C.C."/>
            <person name="Nguyen T."/>
            <person name="Morris S."/>
            <person name="Hill D."/>
            <person name="Sakanari J.A."/>
        </authorList>
    </citation>
    <scope>NUCLEOTIDE SEQUENCE [MRNA]</scope>
</reference>
<feature type="signal peptide" evidence="2">
    <location>
        <begin position="1"/>
        <end position="17"/>
    </location>
</feature>
<feature type="chain" id="PRO_0000034308" description="Serine protease inhibitor 3">
    <location>
        <begin position="18"/>
        <end position="77"/>
    </location>
</feature>
<feature type="domain" description="TIL">
    <location>
        <begin position="21"/>
        <end position="74"/>
    </location>
</feature>
<feature type="site" description="Reactive bond" evidence="1">
    <location>
        <begin position="46"/>
        <end position="47"/>
    </location>
</feature>
<feature type="disulfide bond" evidence="1">
    <location>
        <begin position="21"/>
        <end position="53"/>
    </location>
</feature>
<feature type="disulfide bond" evidence="1">
    <location>
        <begin position="30"/>
        <end position="48"/>
    </location>
</feature>
<feature type="disulfide bond" evidence="1">
    <location>
        <begin position="33"/>
        <end position="44"/>
    </location>
</feature>
<feature type="disulfide bond" evidence="1">
    <location>
        <begin position="55"/>
        <end position="68"/>
    </location>
</feature>
<keyword id="KW-1015">Disulfide bond</keyword>
<keyword id="KW-0646">Protease inhibitor</keyword>
<keyword id="KW-0964">Secreted</keyword>
<keyword id="KW-0722">Serine protease inhibitor</keyword>
<keyword id="KW-0732">Signal</keyword>
<proteinExistence type="inferred from homology"/>
<protein>
    <recommendedName>
        <fullName>Serine protease inhibitor 3</fullName>
    </recommendedName>
    <alternativeName>
        <fullName>ASPI-3</fullName>
    </alternativeName>
</protein>
<dbReference type="EMBL" id="U94498">
    <property type="protein sequence ID" value="AAC61299.1"/>
    <property type="molecule type" value="mRNA"/>
</dbReference>
<dbReference type="SMR" id="O77418"/>
<dbReference type="MEROPS" id="I08.005"/>
<dbReference type="GO" id="GO:0005576">
    <property type="term" value="C:extracellular region"/>
    <property type="evidence" value="ECO:0007669"/>
    <property type="project" value="UniProtKB-SubCell"/>
</dbReference>
<dbReference type="GO" id="GO:0004867">
    <property type="term" value="F:serine-type endopeptidase inhibitor activity"/>
    <property type="evidence" value="ECO:0007669"/>
    <property type="project" value="UniProtKB-KW"/>
</dbReference>
<dbReference type="Gene3D" id="2.10.25.10">
    <property type="entry name" value="Laminin"/>
    <property type="match status" value="1"/>
</dbReference>
<dbReference type="InterPro" id="IPR036084">
    <property type="entry name" value="Ser_inhib-like_sf"/>
</dbReference>
<dbReference type="SUPFAM" id="SSF57567">
    <property type="entry name" value="Serine protease inhibitors"/>
    <property type="match status" value="1"/>
</dbReference>
<evidence type="ECO:0000250" key="1"/>
<evidence type="ECO:0000255" key="2"/>
<sequence length="77" mass="8625">MMFTPLIVLTLLVLATAEHQCGPNEQWSGCPKCELQSGESDKPCATICGEPKCYCSPDKYRRIPDGRCIRKIQCPQH</sequence>
<accession>O77418</accession>